<name>VPB39_MYCTO</name>
<dbReference type="EMBL" id="AE000516">
    <property type="protein sequence ID" value="AAK46916.1"/>
    <property type="molecule type" value="Genomic_DNA"/>
</dbReference>
<dbReference type="RefSeq" id="WP_003412975.1">
    <property type="nucleotide sequence ID" value="NZ_KK341227.1"/>
</dbReference>
<dbReference type="SMR" id="P9WJ22"/>
<dbReference type="KEGG" id="mtc:MT2606"/>
<dbReference type="PATRIC" id="fig|83331.31.peg.2811"/>
<dbReference type="HOGENOM" id="CLU_186849_1_0_11"/>
<dbReference type="Proteomes" id="UP000001020">
    <property type="component" value="Chromosome"/>
</dbReference>
<proteinExistence type="inferred from homology"/>
<feature type="chain" id="PRO_0000427905" description="Antitoxin VapB39">
    <location>
        <begin position="1"/>
        <end position="74"/>
    </location>
</feature>
<gene>
    <name type="primary">vapB39</name>
    <name type="ordered locus">MT2606</name>
</gene>
<organism>
    <name type="scientific">Mycobacterium tuberculosis (strain CDC 1551 / Oshkosh)</name>
    <dbReference type="NCBI Taxonomy" id="83331"/>
    <lineage>
        <taxon>Bacteria</taxon>
        <taxon>Bacillati</taxon>
        <taxon>Actinomycetota</taxon>
        <taxon>Actinomycetes</taxon>
        <taxon>Mycobacteriales</taxon>
        <taxon>Mycobacteriaceae</taxon>
        <taxon>Mycobacterium</taxon>
        <taxon>Mycobacterium tuberculosis complex</taxon>
    </lineage>
</organism>
<sequence length="74" mass="7994">MRTTLQIDDDVLEDARSIARSEGKSVGAVISELARRSLRPVGIVEVDGFPVFDVPPDAPTVTSEDVVRALEDDV</sequence>
<accession>P9WJ22</accession>
<accession>L0T9W7</accession>
<accession>Q79FD2</accession>
<accession>Q8VJG5</accession>
<comment type="function">
    <text evidence="1">Antitoxin component of a type II toxin-antitoxin (TA) system.</text>
</comment>
<reference key="1">
    <citation type="journal article" date="2002" name="J. Bacteriol.">
        <title>Whole-genome comparison of Mycobacterium tuberculosis clinical and laboratory strains.</title>
        <authorList>
            <person name="Fleischmann R.D."/>
            <person name="Alland D."/>
            <person name="Eisen J.A."/>
            <person name="Carpenter L."/>
            <person name="White O."/>
            <person name="Peterson J.D."/>
            <person name="DeBoy R.T."/>
            <person name="Dodson R.J."/>
            <person name="Gwinn M.L."/>
            <person name="Haft D.H."/>
            <person name="Hickey E.K."/>
            <person name="Kolonay J.F."/>
            <person name="Nelson W.C."/>
            <person name="Umayam L.A."/>
            <person name="Ermolaeva M.D."/>
            <person name="Salzberg S.L."/>
            <person name="Delcher A."/>
            <person name="Utterback T.R."/>
            <person name="Weidman J.F."/>
            <person name="Khouri H.M."/>
            <person name="Gill J."/>
            <person name="Mikula A."/>
            <person name="Bishai W."/>
            <person name="Jacobs W.R. Jr."/>
            <person name="Venter J.C."/>
            <person name="Fraser C.M."/>
        </authorList>
    </citation>
    <scope>NUCLEOTIDE SEQUENCE [LARGE SCALE GENOMIC DNA]</scope>
    <source>
        <strain>CDC 1551 / Oshkosh</strain>
    </source>
</reference>
<protein>
    <recommendedName>
        <fullName>Antitoxin VapB39</fullName>
    </recommendedName>
</protein>
<keyword id="KW-1185">Reference proteome</keyword>
<keyword id="KW-1277">Toxin-antitoxin system</keyword>
<evidence type="ECO:0000250" key="1"/>